<comment type="function">
    <text evidence="1">Binds to 23S rRNA. Forms part of two intersubunit bridges in the 70S ribosome.</text>
</comment>
<comment type="subunit">
    <text evidence="1">Part of the 50S ribosomal subunit. Forms a cluster with proteins L3 and L19. In the 70S ribosome, L14 and L19 interact and together make contacts with the 16S rRNA in bridges B5 and B8.</text>
</comment>
<comment type="similarity">
    <text evidence="1">Belongs to the universal ribosomal protein uL14 family.</text>
</comment>
<proteinExistence type="inferred from homology"/>
<evidence type="ECO:0000255" key="1">
    <source>
        <dbReference type="HAMAP-Rule" id="MF_01367"/>
    </source>
</evidence>
<evidence type="ECO:0000305" key="2"/>
<accession>A0PXV6</accession>
<dbReference type="EMBL" id="CP000382">
    <property type="protein sequence ID" value="ABK61792.1"/>
    <property type="molecule type" value="Genomic_DNA"/>
</dbReference>
<dbReference type="RefSeq" id="WP_003367798.1">
    <property type="nucleotide sequence ID" value="NC_008593.1"/>
</dbReference>
<dbReference type="SMR" id="A0PXV6"/>
<dbReference type="STRING" id="386415.NT01CX_1125"/>
<dbReference type="KEGG" id="cno:NT01CX_1125"/>
<dbReference type="eggNOG" id="COG0093">
    <property type="taxonomic scope" value="Bacteria"/>
</dbReference>
<dbReference type="HOGENOM" id="CLU_095071_2_1_9"/>
<dbReference type="Proteomes" id="UP000008220">
    <property type="component" value="Chromosome"/>
</dbReference>
<dbReference type="GO" id="GO:0022625">
    <property type="term" value="C:cytosolic large ribosomal subunit"/>
    <property type="evidence" value="ECO:0007669"/>
    <property type="project" value="TreeGrafter"/>
</dbReference>
<dbReference type="GO" id="GO:0070180">
    <property type="term" value="F:large ribosomal subunit rRNA binding"/>
    <property type="evidence" value="ECO:0007669"/>
    <property type="project" value="TreeGrafter"/>
</dbReference>
<dbReference type="GO" id="GO:0003735">
    <property type="term" value="F:structural constituent of ribosome"/>
    <property type="evidence" value="ECO:0007669"/>
    <property type="project" value="InterPro"/>
</dbReference>
<dbReference type="GO" id="GO:0006412">
    <property type="term" value="P:translation"/>
    <property type="evidence" value="ECO:0007669"/>
    <property type="project" value="UniProtKB-UniRule"/>
</dbReference>
<dbReference type="CDD" id="cd00337">
    <property type="entry name" value="Ribosomal_uL14"/>
    <property type="match status" value="1"/>
</dbReference>
<dbReference type="FunFam" id="2.40.150.20:FF:000001">
    <property type="entry name" value="50S ribosomal protein L14"/>
    <property type="match status" value="1"/>
</dbReference>
<dbReference type="Gene3D" id="2.40.150.20">
    <property type="entry name" value="Ribosomal protein L14"/>
    <property type="match status" value="1"/>
</dbReference>
<dbReference type="HAMAP" id="MF_01367">
    <property type="entry name" value="Ribosomal_uL14"/>
    <property type="match status" value="1"/>
</dbReference>
<dbReference type="InterPro" id="IPR000218">
    <property type="entry name" value="Ribosomal_uL14"/>
</dbReference>
<dbReference type="InterPro" id="IPR005745">
    <property type="entry name" value="Ribosomal_uL14_bac-type"/>
</dbReference>
<dbReference type="InterPro" id="IPR019972">
    <property type="entry name" value="Ribosomal_uL14_CS"/>
</dbReference>
<dbReference type="InterPro" id="IPR036853">
    <property type="entry name" value="Ribosomal_uL14_sf"/>
</dbReference>
<dbReference type="NCBIfam" id="TIGR01067">
    <property type="entry name" value="rplN_bact"/>
    <property type="match status" value="1"/>
</dbReference>
<dbReference type="PANTHER" id="PTHR11761">
    <property type="entry name" value="50S/60S RIBOSOMAL PROTEIN L14/L23"/>
    <property type="match status" value="1"/>
</dbReference>
<dbReference type="PANTHER" id="PTHR11761:SF3">
    <property type="entry name" value="LARGE RIBOSOMAL SUBUNIT PROTEIN UL14M"/>
    <property type="match status" value="1"/>
</dbReference>
<dbReference type="Pfam" id="PF00238">
    <property type="entry name" value="Ribosomal_L14"/>
    <property type="match status" value="1"/>
</dbReference>
<dbReference type="SMART" id="SM01374">
    <property type="entry name" value="Ribosomal_L14"/>
    <property type="match status" value="1"/>
</dbReference>
<dbReference type="SUPFAM" id="SSF50193">
    <property type="entry name" value="Ribosomal protein L14"/>
    <property type="match status" value="1"/>
</dbReference>
<dbReference type="PROSITE" id="PS00049">
    <property type="entry name" value="RIBOSOMAL_L14"/>
    <property type="match status" value="1"/>
</dbReference>
<name>RL14_CLONN</name>
<reference key="1">
    <citation type="journal article" date="2006" name="Nat. Biotechnol.">
        <title>The genome and transcriptomes of the anti-tumor agent Clostridium novyi-NT.</title>
        <authorList>
            <person name="Bettegowda C."/>
            <person name="Huang X."/>
            <person name="Lin J."/>
            <person name="Cheong I."/>
            <person name="Kohli M."/>
            <person name="Szabo S.A."/>
            <person name="Zhang X."/>
            <person name="Diaz L.A. Jr."/>
            <person name="Velculescu V.E."/>
            <person name="Parmigiani G."/>
            <person name="Kinzler K.W."/>
            <person name="Vogelstein B."/>
            <person name="Zhou S."/>
        </authorList>
    </citation>
    <scope>NUCLEOTIDE SEQUENCE [LARGE SCALE GENOMIC DNA]</scope>
    <source>
        <strain>NT</strain>
    </source>
</reference>
<feature type="chain" id="PRO_1000055562" description="Large ribosomal subunit protein uL14">
    <location>
        <begin position="1"/>
        <end position="124"/>
    </location>
</feature>
<protein>
    <recommendedName>
        <fullName evidence="1">Large ribosomal subunit protein uL14</fullName>
    </recommendedName>
    <alternativeName>
        <fullName evidence="2">50S ribosomal protein L14</fullName>
    </alternativeName>
</protein>
<organism>
    <name type="scientific">Clostridium novyi (strain NT)</name>
    <dbReference type="NCBI Taxonomy" id="386415"/>
    <lineage>
        <taxon>Bacteria</taxon>
        <taxon>Bacillati</taxon>
        <taxon>Bacillota</taxon>
        <taxon>Clostridia</taxon>
        <taxon>Eubacteriales</taxon>
        <taxon>Clostridiaceae</taxon>
        <taxon>Clostridium</taxon>
    </lineage>
</organism>
<sequence length="124" mass="13559">MIQPQTRLKVADNTGAKEIMCIRVLGGSKRKFGNIGDVIVASVKSATPGGVVKKGEVVKAVIVRTKRGVRRADGSYIKFDENAAVVIKDDKQPRGTRIFGPIARELREKDKEFNKILSLAPEVL</sequence>
<keyword id="KW-1185">Reference proteome</keyword>
<keyword id="KW-0687">Ribonucleoprotein</keyword>
<keyword id="KW-0689">Ribosomal protein</keyword>
<keyword id="KW-0694">RNA-binding</keyword>
<keyword id="KW-0699">rRNA-binding</keyword>
<gene>
    <name evidence="1" type="primary">rplN</name>
    <name type="ordered locus">NT01CX_1125</name>
</gene>